<protein>
    <recommendedName>
        <fullName evidence="1">Phosphoglycerate kinase</fullName>
        <ecNumber evidence="1">2.7.2.3</ecNumber>
    </recommendedName>
</protein>
<evidence type="ECO:0000255" key="1">
    <source>
        <dbReference type="HAMAP-Rule" id="MF_00145"/>
    </source>
</evidence>
<dbReference type="EC" id="2.7.2.3" evidence="1"/>
<dbReference type="EMBL" id="CP000926">
    <property type="protein sequence ID" value="ABZ00897.1"/>
    <property type="molecule type" value="Genomic_DNA"/>
</dbReference>
<dbReference type="RefSeq" id="WP_012274523.1">
    <property type="nucleotide sequence ID" value="NC_010322.1"/>
</dbReference>
<dbReference type="SMR" id="B0KLY7"/>
<dbReference type="KEGG" id="ppg:PputGB1_5012"/>
<dbReference type="eggNOG" id="COG0126">
    <property type="taxonomic scope" value="Bacteria"/>
</dbReference>
<dbReference type="HOGENOM" id="CLU_025427_0_2_6"/>
<dbReference type="UniPathway" id="UPA00109">
    <property type="reaction ID" value="UER00185"/>
</dbReference>
<dbReference type="Proteomes" id="UP000002157">
    <property type="component" value="Chromosome"/>
</dbReference>
<dbReference type="GO" id="GO:0005829">
    <property type="term" value="C:cytosol"/>
    <property type="evidence" value="ECO:0007669"/>
    <property type="project" value="TreeGrafter"/>
</dbReference>
<dbReference type="GO" id="GO:0043531">
    <property type="term" value="F:ADP binding"/>
    <property type="evidence" value="ECO:0007669"/>
    <property type="project" value="TreeGrafter"/>
</dbReference>
<dbReference type="GO" id="GO:0005524">
    <property type="term" value="F:ATP binding"/>
    <property type="evidence" value="ECO:0007669"/>
    <property type="project" value="UniProtKB-KW"/>
</dbReference>
<dbReference type="GO" id="GO:0004618">
    <property type="term" value="F:phosphoglycerate kinase activity"/>
    <property type="evidence" value="ECO:0007669"/>
    <property type="project" value="UniProtKB-UniRule"/>
</dbReference>
<dbReference type="GO" id="GO:0006094">
    <property type="term" value="P:gluconeogenesis"/>
    <property type="evidence" value="ECO:0007669"/>
    <property type="project" value="TreeGrafter"/>
</dbReference>
<dbReference type="GO" id="GO:0006096">
    <property type="term" value="P:glycolytic process"/>
    <property type="evidence" value="ECO:0007669"/>
    <property type="project" value="UniProtKB-UniRule"/>
</dbReference>
<dbReference type="FunFam" id="3.40.50.1260:FF:000001">
    <property type="entry name" value="Phosphoglycerate kinase"/>
    <property type="match status" value="1"/>
</dbReference>
<dbReference type="FunFam" id="3.40.50.1260:FF:000002">
    <property type="entry name" value="Phosphoglycerate kinase"/>
    <property type="match status" value="1"/>
</dbReference>
<dbReference type="Gene3D" id="3.40.50.1260">
    <property type="entry name" value="Phosphoglycerate kinase, N-terminal domain"/>
    <property type="match status" value="2"/>
</dbReference>
<dbReference type="HAMAP" id="MF_00145">
    <property type="entry name" value="Phosphoglyc_kinase"/>
    <property type="match status" value="1"/>
</dbReference>
<dbReference type="InterPro" id="IPR001576">
    <property type="entry name" value="Phosphoglycerate_kinase"/>
</dbReference>
<dbReference type="InterPro" id="IPR015911">
    <property type="entry name" value="Phosphoglycerate_kinase_CS"/>
</dbReference>
<dbReference type="InterPro" id="IPR015824">
    <property type="entry name" value="Phosphoglycerate_kinase_N"/>
</dbReference>
<dbReference type="InterPro" id="IPR036043">
    <property type="entry name" value="Phosphoglycerate_kinase_sf"/>
</dbReference>
<dbReference type="PANTHER" id="PTHR11406">
    <property type="entry name" value="PHOSPHOGLYCERATE KINASE"/>
    <property type="match status" value="1"/>
</dbReference>
<dbReference type="PANTHER" id="PTHR11406:SF23">
    <property type="entry name" value="PHOSPHOGLYCERATE KINASE 1, CHLOROPLASTIC-RELATED"/>
    <property type="match status" value="1"/>
</dbReference>
<dbReference type="Pfam" id="PF00162">
    <property type="entry name" value="PGK"/>
    <property type="match status" value="1"/>
</dbReference>
<dbReference type="PIRSF" id="PIRSF000724">
    <property type="entry name" value="Pgk"/>
    <property type="match status" value="1"/>
</dbReference>
<dbReference type="PRINTS" id="PR00477">
    <property type="entry name" value="PHGLYCKINASE"/>
</dbReference>
<dbReference type="SUPFAM" id="SSF53748">
    <property type="entry name" value="Phosphoglycerate kinase"/>
    <property type="match status" value="1"/>
</dbReference>
<dbReference type="PROSITE" id="PS00111">
    <property type="entry name" value="PGLYCERATE_KINASE"/>
    <property type="match status" value="1"/>
</dbReference>
<organism>
    <name type="scientific">Pseudomonas putida (strain GB-1)</name>
    <dbReference type="NCBI Taxonomy" id="76869"/>
    <lineage>
        <taxon>Bacteria</taxon>
        <taxon>Pseudomonadati</taxon>
        <taxon>Pseudomonadota</taxon>
        <taxon>Gammaproteobacteria</taxon>
        <taxon>Pseudomonadales</taxon>
        <taxon>Pseudomonadaceae</taxon>
        <taxon>Pseudomonas</taxon>
    </lineage>
</organism>
<name>PGK_PSEPG</name>
<feature type="chain" id="PRO_1000076599" description="Phosphoglycerate kinase">
    <location>
        <begin position="1"/>
        <end position="387"/>
    </location>
</feature>
<feature type="binding site" evidence="1">
    <location>
        <begin position="21"/>
        <end position="23"/>
    </location>
    <ligand>
        <name>substrate</name>
    </ligand>
</feature>
<feature type="binding site" evidence="1">
    <location>
        <position position="36"/>
    </location>
    <ligand>
        <name>substrate</name>
    </ligand>
</feature>
<feature type="binding site" evidence="1">
    <location>
        <begin position="59"/>
        <end position="62"/>
    </location>
    <ligand>
        <name>substrate</name>
    </ligand>
</feature>
<feature type="binding site" evidence="1">
    <location>
        <position position="113"/>
    </location>
    <ligand>
        <name>substrate</name>
    </ligand>
</feature>
<feature type="binding site" evidence="1">
    <location>
        <position position="146"/>
    </location>
    <ligand>
        <name>substrate</name>
    </ligand>
</feature>
<feature type="binding site" evidence="1">
    <location>
        <position position="197"/>
    </location>
    <ligand>
        <name>ATP</name>
        <dbReference type="ChEBI" id="CHEBI:30616"/>
    </ligand>
</feature>
<feature type="binding site" evidence="1">
    <location>
        <position position="314"/>
    </location>
    <ligand>
        <name>ATP</name>
        <dbReference type="ChEBI" id="CHEBI:30616"/>
    </ligand>
</feature>
<feature type="binding site" evidence="1">
    <location>
        <begin position="340"/>
        <end position="343"/>
    </location>
    <ligand>
        <name>ATP</name>
        <dbReference type="ChEBI" id="CHEBI:30616"/>
    </ligand>
</feature>
<sequence>MTVLKMTDLDLQGKRVLIREDLNVPVKDGVVASDARILAALPTIKLALEKGAAVMVCSHLGRPTEGEFSAENSLKPVADYLSKALGRDVPLVADYLDGVSVQAGELVLFENVRFNKGEKKNADELAQKYAALCDVFVMDAFGTAHRAEGSTHGVAKFAKVAAAGPLLAAELDALGKALKAPAKPMAAIVAGSKVSTKLDVLNSLSSVCDQLIVGGGIANTFLAAAGHPVGKSLYEPDLVDTAKAIAAKVSVPLPVDVVVAKEFAETAEATVKAIADVAADDMILDIGPQTAANFAELLKSSKTILWNGPVGVFEFDQFGNGTKVLAKAIADSAAFSIAGGGDTLAAIDKYGVSKEISYISTGGGAFLEFVEGKVLPAVAILEERAKA</sequence>
<gene>
    <name evidence="1" type="primary">pgk</name>
    <name type="ordered locus">PputGB1_5012</name>
</gene>
<proteinExistence type="inferred from homology"/>
<keyword id="KW-0067">ATP-binding</keyword>
<keyword id="KW-0963">Cytoplasm</keyword>
<keyword id="KW-0324">Glycolysis</keyword>
<keyword id="KW-0418">Kinase</keyword>
<keyword id="KW-0547">Nucleotide-binding</keyword>
<keyword id="KW-0808">Transferase</keyword>
<accession>B0KLY7</accession>
<comment type="catalytic activity">
    <reaction evidence="1">
        <text>(2R)-3-phosphoglycerate + ATP = (2R)-3-phospho-glyceroyl phosphate + ADP</text>
        <dbReference type="Rhea" id="RHEA:14801"/>
        <dbReference type="ChEBI" id="CHEBI:30616"/>
        <dbReference type="ChEBI" id="CHEBI:57604"/>
        <dbReference type="ChEBI" id="CHEBI:58272"/>
        <dbReference type="ChEBI" id="CHEBI:456216"/>
        <dbReference type="EC" id="2.7.2.3"/>
    </reaction>
</comment>
<comment type="pathway">
    <text evidence="1">Carbohydrate degradation; glycolysis; pyruvate from D-glyceraldehyde 3-phosphate: step 2/5.</text>
</comment>
<comment type="subunit">
    <text evidence="1">Monomer.</text>
</comment>
<comment type="subcellular location">
    <subcellularLocation>
        <location evidence="1">Cytoplasm</location>
    </subcellularLocation>
</comment>
<comment type="similarity">
    <text evidence="1">Belongs to the phosphoglycerate kinase family.</text>
</comment>
<reference key="1">
    <citation type="submission" date="2008-01" db="EMBL/GenBank/DDBJ databases">
        <title>Complete sequence of Pseudomonas putida GB-1.</title>
        <authorList>
            <consortium name="US DOE Joint Genome Institute"/>
            <person name="Copeland A."/>
            <person name="Lucas S."/>
            <person name="Lapidus A."/>
            <person name="Barry K."/>
            <person name="Glavina del Rio T."/>
            <person name="Dalin E."/>
            <person name="Tice H."/>
            <person name="Pitluck S."/>
            <person name="Bruce D."/>
            <person name="Goodwin L."/>
            <person name="Chertkov O."/>
            <person name="Brettin T."/>
            <person name="Detter J.C."/>
            <person name="Han C."/>
            <person name="Kuske C.R."/>
            <person name="Schmutz J."/>
            <person name="Larimer F."/>
            <person name="Land M."/>
            <person name="Hauser L."/>
            <person name="Kyrpides N."/>
            <person name="Kim E."/>
            <person name="McCarthy J.K."/>
            <person name="Richardson P."/>
        </authorList>
    </citation>
    <scope>NUCLEOTIDE SEQUENCE [LARGE SCALE GENOMIC DNA]</scope>
    <source>
        <strain>GB-1</strain>
    </source>
</reference>